<protein>
    <recommendedName>
        <fullName>Protein TIFY 4B</fullName>
    </recommendedName>
    <alternativeName>
        <fullName>Protein PEAPOD 2</fullName>
    </alternativeName>
</protein>
<dbReference type="EMBL" id="Z97336">
    <property type="protein sequence ID" value="CAB10251.1"/>
    <property type="status" value="ALT_SEQ"/>
    <property type="molecule type" value="Genomic_DNA"/>
</dbReference>
<dbReference type="EMBL" id="AL161539">
    <property type="protein sequence ID" value="CAB78514.1"/>
    <property type="status" value="ALT_SEQ"/>
    <property type="molecule type" value="Genomic_DNA"/>
</dbReference>
<dbReference type="EMBL" id="CP002687">
    <property type="protein sequence ID" value="AEE83487.1"/>
    <property type="molecule type" value="Genomic_DNA"/>
</dbReference>
<dbReference type="EMBL" id="AK117854">
    <property type="protein sequence ID" value="BAC42495.1"/>
    <property type="molecule type" value="mRNA"/>
</dbReference>
<dbReference type="PIR" id="A71410">
    <property type="entry name" value="A71410"/>
</dbReference>
<dbReference type="RefSeq" id="NP_193208.2">
    <property type="nucleotide sequence ID" value="NM_117557.3"/>
</dbReference>
<dbReference type="BioGRID" id="12422">
    <property type="interactions" value="22"/>
</dbReference>
<dbReference type="DIP" id="DIP-58588N"/>
<dbReference type="FunCoup" id="Q8GY55">
    <property type="interactions" value="1221"/>
</dbReference>
<dbReference type="IntAct" id="Q8GY55">
    <property type="interactions" value="13"/>
</dbReference>
<dbReference type="STRING" id="3702.Q8GY55"/>
<dbReference type="iPTMnet" id="Q8GY55"/>
<dbReference type="PaxDb" id="3702-AT4G14720.1"/>
<dbReference type="EnsemblPlants" id="AT4G14720.1">
    <property type="protein sequence ID" value="AT4G14720.1"/>
    <property type="gene ID" value="AT4G14720"/>
</dbReference>
<dbReference type="GeneID" id="827125"/>
<dbReference type="Gramene" id="AT4G14720.1">
    <property type="protein sequence ID" value="AT4G14720.1"/>
    <property type="gene ID" value="AT4G14720"/>
</dbReference>
<dbReference type="KEGG" id="ath:AT4G14720"/>
<dbReference type="Araport" id="AT4G14720"/>
<dbReference type="TAIR" id="AT4G14720">
    <property type="gene designation" value="PPD2"/>
</dbReference>
<dbReference type="eggNOG" id="ENOG502QWBC">
    <property type="taxonomic scope" value="Eukaryota"/>
</dbReference>
<dbReference type="HOGENOM" id="CLU_053062_0_0_1"/>
<dbReference type="InParanoid" id="Q8GY55"/>
<dbReference type="OMA" id="ARIPFQE"/>
<dbReference type="PhylomeDB" id="Q8GY55"/>
<dbReference type="PRO" id="PR:Q8GY55"/>
<dbReference type="Proteomes" id="UP000006548">
    <property type="component" value="Chromosome 4"/>
</dbReference>
<dbReference type="ExpressionAtlas" id="Q8GY55">
    <property type="expression patterns" value="baseline and differential"/>
</dbReference>
<dbReference type="GO" id="GO:0005634">
    <property type="term" value="C:nucleus"/>
    <property type="evidence" value="ECO:0000314"/>
    <property type="project" value="TAIR"/>
</dbReference>
<dbReference type="GO" id="GO:0048366">
    <property type="term" value="P:leaf development"/>
    <property type="evidence" value="ECO:0000315"/>
    <property type="project" value="TAIR"/>
</dbReference>
<dbReference type="GO" id="GO:1901371">
    <property type="term" value="P:regulation of leaf morphogenesis"/>
    <property type="evidence" value="ECO:0000315"/>
    <property type="project" value="TAIR"/>
</dbReference>
<dbReference type="InterPro" id="IPR018467">
    <property type="entry name" value="CCT_CS"/>
</dbReference>
<dbReference type="InterPro" id="IPR040390">
    <property type="entry name" value="TIFY/JAZ"/>
</dbReference>
<dbReference type="InterPro" id="IPR010399">
    <property type="entry name" value="Tify_dom"/>
</dbReference>
<dbReference type="PANTHER" id="PTHR33077:SF42">
    <property type="entry name" value="PROTEIN TIFY 4A-RELATED"/>
    <property type="match status" value="1"/>
</dbReference>
<dbReference type="PANTHER" id="PTHR33077">
    <property type="entry name" value="PROTEIN TIFY 4A-RELATED-RELATED"/>
    <property type="match status" value="1"/>
</dbReference>
<dbReference type="Pfam" id="PF09425">
    <property type="entry name" value="Jas_motif"/>
    <property type="match status" value="1"/>
</dbReference>
<dbReference type="Pfam" id="PF06200">
    <property type="entry name" value="tify"/>
    <property type="match status" value="1"/>
</dbReference>
<dbReference type="SMART" id="SM00979">
    <property type="entry name" value="TIFY"/>
    <property type="match status" value="1"/>
</dbReference>
<dbReference type="PROSITE" id="PS51320">
    <property type="entry name" value="TIFY"/>
    <property type="match status" value="1"/>
</dbReference>
<evidence type="ECO:0000255" key="1"/>
<evidence type="ECO:0000255" key="2">
    <source>
        <dbReference type="PROSITE-ProRule" id="PRU00650"/>
    </source>
</evidence>
<evidence type="ECO:0000255" key="3">
    <source>
        <dbReference type="PROSITE-ProRule" id="PRU00768"/>
    </source>
</evidence>
<evidence type="ECO:0000256" key="4">
    <source>
        <dbReference type="SAM" id="MobiDB-lite"/>
    </source>
</evidence>
<evidence type="ECO:0000269" key="5">
    <source>
    </source>
</evidence>
<evidence type="ECO:0000269" key="6">
    <source>
    </source>
</evidence>
<evidence type="ECO:0000305" key="7"/>
<sequence>MDVGVTTAKSILEKPLKLLTEEDISQLTREDCRKFLKEKGMRRPSWNKSQAIQQVLSLKALYEPGDDSGAGILRKILVSQPPNPPRVTTTLIEPRNELEACGRIPLQEDDGACHRRDSPRSAEFSGSSGQFVADKDSHKTVSVSPRSPAETNAVVGQMTIFYSGKVNVYDGVPPEKARSIMHFAANPIDLPENGIFASSRMISKPMSKEKMVELPQYGLEKAPASRDSDVEGQANRKVSLQRYLEKRKDRRFSKTKKAPGVASSSLEMFLNRQPRMNAAYSQNLSGTGHCESPENQTKSPNISVDLNSDLNSEDN</sequence>
<keyword id="KW-0217">Developmental protein</keyword>
<keyword id="KW-0539">Nucleus</keyword>
<keyword id="KW-1185">Reference proteome</keyword>
<reference key="1">
    <citation type="journal article" date="1998" name="Nature">
        <title>Analysis of 1.9 Mb of contiguous sequence from chromosome 4 of Arabidopsis thaliana.</title>
        <authorList>
            <person name="Bevan M."/>
            <person name="Bancroft I."/>
            <person name="Bent E."/>
            <person name="Love K."/>
            <person name="Goodman H.M."/>
            <person name="Dean C."/>
            <person name="Bergkamp R."/>
            <person name="Dirkse W."/>
            <person name="van Staveren M."/>
            <person name="Stiekema W."/>
            <person name="Drost L."/>
            <person name="Ridley P."/>
            <person name="Hudson S.-A."/>
            <person name="Patel K."/>
            <person name="Murphy G."/>
            <person name="Piffanelli P."/>
            <person name="Wedler H."/>
            <person name="Wedler E."/>
            <person name="Wambutt R."/>
            <person name="Weitzenegger T."/>
            <person name="Pohl T."/>
            <person name="Terryn N."/>
            <person name="Gielen J."/>
            <person name="Villarroel R."/>
            <person name="De Clercq R."/>
            <person name="van Montagu M."/>
            <person name="Lecharny A."/>
            <person name="Aubourg S."/>
            <person name="Gy I."/>
            <person name="Kreis M."/>
            <person name="Lao N."/>
            <person name="Kavanagh T."/>
            <person name="Hempel S."/>
            <person name="Kotter P."/>
            <person name="Entian K.-D."/>
            <person name="Rieger M."/>
            <person name="Schaefer M."/>
            <person name="Funk B."/>
            <person name="Mueller-Auer S."/>
            <person name="Silvey M."/>
            <person name="James R."/>
            <person name="Monfort A."/>
            <person name="Pons A."/>
            <person name="Puigdomenech P."/>
            <person name="Douka A."/>
            <person name="Voukelatou E."/>
            <person name="Milioni D."/>
            <person name="Hatzopoulos P."/>
            <person name="Piravandi E."/>
            <person name="Obermaier B."/>
            <person name="Hilbert H."/>
            <person name="Duesterhoeft A."/>
            <person name="Moores T."/>
            <person name="Jones J.D.G."/>
            <person name="Eneva T."/>
            <person name="Palme K."/>
            <person name="Benes V."/>
            <person name="Rechmann S."/>
            <person name="Ansorge W."/>
            <person name="Cooke R."/>
            <person name="Berger C."/>
            <person name="Delseny M."/>
            <person name="Voet M."/>
            <person name="Volckaert G."/>
            <person name="Mewes H.-W."/>
            <person name="Klosterman S."/>
            <person name="Schueller C."/>
            <person name="Chalwatzis N."/>
        </authorList>
    </citation>
    <scope>NUCLEOTIDE SEQUENCE [LARGE SCALE GENOMIC DNA]</scope>
    <source>
        <strain>cv. Columbia</strain>
    </source>
</reference>
<reference key="2">
    <citation type="journal article" date="1999" name="Nature">
        <title>Sequence and analysis of chromosome 4 of the plant Arabidopsis thaliana.</title>
        <authorList>
            <person name="Mayer K.F.X."/>
            <person name="Schueller C."/>
            <person name="Wambutt R."/>
            <person name="Murphy G."/>
            <person name="Volckaert G."/>
            <person name="Pohl T."/>
            <person name="Duesterhoeft A."/>
            <person name="Stiekema W."/>
            <person name="Entian K.-D."/>
            <person name="Terryn N."/>
            <person name="Harris B."/>
            <person name="Ansorge W."/>
            <person name="Brandt P."/>
            <person name="Grivell L.A."/>
            <person name="Rieger M."/>
            <person name="Weichselgartner M."/>
            <person name="de Simone V."/>
            <person name="Obermaier B."/>
            <person name="Mache R."/>
            <person name="Mueller M."/>
            <person name="Kreis M."/>
            <person name="Delseny M."/>
            <person name="Puigdomenech P."/>
            <person name="Watson M."/>
            <person name="Schmidtheini T."/>
            <person name="Reichert B."/>
            <person name="Portetelle D."/>
            <person name="Perez-Alonso M."/>
            <person name="Boutry M."/>
            <person name="Bancroft I."/>
            <person name="Vos P."/>
            <person name="Hoheisel J."/>
            <person name="Zimmermann W."/>
            <person name="Wedler H."/>
            <person name="Ridley P."/>
            <person name="Langham S.-A."/>
            <person name="McCullagh B."/>
            <person name="Bilham L."/>
            <person name="Robben J."/>
            <person name="van der Schueren J."/>
            <person name="Grymonprez B."/>
            <person name="Chuang Y.-J."/>
            <person name="Vandenbussche F."/>
            <person name="Braeken M."/>
            <person name="Weltjens I."/>
            <person name="Voet M."/>
            <person name="Bastiaens I."/>
            <person name="Aert R."/>
            <person name="Defoor E."/>
            <person name="Weitzenegger T."/>
            <person name="Bothe G."/>
            <person name="Ramsperger U."/>
            <person name="Hilbert H."/>
            <person name="Braun M."/>
            <person name="Holzer E."/>
            <person name="Brandt A."/>
            <person name="Peters S."/>
            <person name="van Staveren M."/>
            <person name="Dirkse W."/>
            <person name="Mooijman P."/>
            <person name="Klein Lankhorst R."/>
            <person name="Rose M."/>
            <person name="Hauf J."/>
            <person name="Koetter P."/>
            <person name="Berneiser S."/>
            <person name="Hempel S."/>
            <person name="Feldpausch M."/>
            <person name="Lamberth S."/>
            <person name="Van den Daele H."/>
            <person name="De Keyser A."/>
            <person name="Buysshaert C."/>
            <person name="Gielen J."/>
            <person name="Villarroel R."/>
            <person name="De Clercq R."/>
            <person name="van Montagu M."/>
            <person name="Rogers J."/>
            <person name="Cronin A."/>
            <person name="Quail M.A."/>
            <person name="Bray-Allen S."/>
            <person name="Clark L."/>
            <person name="Doggett J."/>
            <person name="Hall S."/>
            <person name="Kay M."/>
            <person name="Lennard N."/>
            <person name="McLay K."/>
            <person name="Mayes R."/>
            <person name="Pettett A."/>
            <person name="Rajandream M.A."/>
            <person name="Lyne M."/>
            <person name="Benes V."/>
            <person name="Rechmann S."/>
            <person name="Borkova D."/>
            <person name="Bloecker H."/>
            <person name="Scharfe M."/>
            <person name="Grimm M."/>
            <person name="Loehnert T.-H."/>
            <person name="Dose S."/>
            <person name="de Haan M."/>
            <person name="Maarse A.C."/>
            <person name="Schaefer M."/>
            <person name="Mueller-Auer S."/>
            <person name="Gabel C."/>
            <person name="Fuchs M."/>
            <person name="Fartmann B."/>
            <person name="Granderath K."/>
            <person name="Dauner D."/>
            <person name="Herzl A."/>
            <person name="Neumann S."/>
            <person name="Argiriou A."/>
            <person name="Vitale D."/>
            <person name="Liguori R."/>
            <person name="Piravandi E."/>
            <person name="Massenet O."/>
            <person name="Quigley F."/>
            <person name="Clabauld G."/>
            <person name="Muendlein A."/>
            <person name="Felber R."/>
            <person name="Schnabl S."/>
            <person name="Hiller R."/>
            <person name="Schmidt W."/>
            <person name="Lecharny A."/>
            <person name="Aubourg S."/>
            <person name="Chefdor F."/>
            <person name="Cooke R."/>
            <person name="Berger C."/>
            <person name="Monfort A."/>
            <person name="Casacuberta E."/>
            <person name="Gibbons T."/>
            <person name="Weber N."/>
            <person name="Vandenbol M."/>
            <person name="Bargues M."/>
            <person name="Terol J."/>
            <person name="Torres A."/>
            <person name="Perez-Perez A."/>
            <person name="Purnelle B."/>
            <person name="Bent E."/>
            <person name="Johnson S."/>
            <person name="Tacon D."/>
            <person name="Jesse T."/>
            <person name="Heijnen L."/>
            <person name="Schwarz S."/>
            <person name="Scholler P."/>
            <person name="Heber S."/>
            <person name="Francs P."/>
            <person name="Bielke C."/>
            <person name="Frishman D."/>
            <person name="Haase D."/>
            <person name="Lemcke K."/>
            <person name="Mewes H.-W."/>
            <person name="Stocker S."/>
            <person name="Zaccaria P."/>
            <person name="Bevan M."/>
            <person name="Wilson R.K."/>
            <person name="de la Bastide M."/>
            <person name="Habermann K."/>
            <person name="Parnell L."/>
            <person name="Dedhia N."/>
            <person name="Gnoj L."/>
            <person name="Schutz K."/>
            <person name="Huang E."/>
            <person name="Spiegel L."/>
            <person name="Sekhon M."/>
            <person name="Murray J."/>
            <person name="Sheet P."/>
            <person name="Cordes M."/>
            <person name="Abu-Threideh J."/>
            <person name="Stoneking T."/>
            <person name="Kalicki J."/>
            <person name="Graves T."/>
            <person name="Harmon G."/>
            <person name="Edwards J."/>
            <person name="Latreille P."/>
            <person name="Courtney L."/>
            <person name="Cloud J."/>
            <person name="Abbott A."/>
            <person name="Scott K."/>
            <person name="Johnson D."/>
            <person name="Minx P."/>
            <person name="Bentley D."/>
            <person name="Fulton B."/>
            <person name="Miller N."/>
            <person name="Greco T."/>
            <person name="Kemp K."/>
            <person name="Kramer J."/>
            <person name="Fulton L."/>
            <person name="Mardis E."/>
            <person name="Dante M."/>
            <person name="Pepin K."/>
            <person name="Hillier L.W."/>
            <person name="Nelson J."/>
            <person name="Spieth J."/>
            <person name="Ryan E."/>
            <person name="Andrews S."/>
            <person name="Geisel C."/>
            <person name="Layman D."/>
            <person name="Du H."/>
            <person name="Ali J."/>
            <person name="Berghoff A."/>
            <person name="Jones K."/>
            <person name="Drone K."/>
            <person name="Cotton M."/>
            <person name="Joshu C."/>
            <person name="Antonoiu B."/>
            <person name="Zidanic M."/>
            <person name="Strong C."/>
            <person name="Sun H."/>
            <person name="Lamar B."/>
            <person name="Yordan C."/>
            <person name="Ma P."/>
            <person name="Zhong J."/>
            <person name="Preston R."/>
            <person name="Vil D."/>
            <person name="Shekher M."/>
            <person name="Matero A."/>
            <person name="Shah R."/>
            <person name="Swaby I.K."/>
            <person name="O'Shaughnessy A."/>
            <person name="Rodriguez M."/>
            <person name="Hoffman J."/>
            <person name="Till S."/>
            <person name="Granat S."/>
            <person name="Shohdy N."/>
            <person name="Hasegawa A."/>
            <person name="Hameed A."/>
            <person name="Lodhi M."/>
            <person name="Johnson A."/>
            <person name="Chen E."/>
            <person name="Marra M.A."/>
            <person name="Martienssen R."/>
            <person name="McCombie W.R."/>
        </authorList>
    </citation>
    <scope>NUCLEOTIDE SEQUENCE [LARGE SCALE GENOMIC DNA]</scope>
    <source>
        <strain>cv. Columbia</strain>
    </source>
</reference>
<reference key="3">
    <citation type="journal article" date="2017" name="Plant J.">
        <title>Araport11: a complete reannotation of the Arabidopsis thaliana reference genome.</title>
        <authorList>
            <person name="Cheng C.Y."/>
            <person name="Krishnakumar V."/>
            <person name="Chan A.P."/>
            <person name="Thibaud-Nissen F."/>
            <person name="Schobel S."/>
            <person name="Town C.D."/>
        </authorList>
    </citation>
    <scope>GENOME REANNOTATION</scope>
    <source>
        <strain>cv. Columbia</strain>
    </source>
</reference>
<reference key="4">
    <citation type="journal article" date="2002" name="Science">
        <title>Functional annotation of a full-length Arabidopsis cDNA collection.</title>
        <authorList>
            <person name="Seki M."/>
            <person name="Narusaka M."/>
            <person name="Kamiya A."/>
            <person name="Ishida J."/>
            <person name="Satou M."/>
            <person name="Sakurai T."/>
            <person name="Nakajima M."/>
            <person name="Enju A."/>
            <person name="Akiyama K."/>
            <person name="Oono Y."/>
            <person name="Muramatsu M."/>
            <person name="Hayashizaki Y."/>
            <person name="Kawai J."/>
            <person name="Carninci P."/>
            <person name="Itoh M."/>
            <person name="Ishii Y."/>
            <person name="Arakawa T."/>
            <person name="Shibata K."/>
            <person name="Shinagawa A."/>
            <person name="Shinozaki K."/>
        </authorList>
    </citation>
    <scope>NUCLEOTIDE SEQUENCE [LARGE SCALE MRNA]</scope>
    <source>
        <strain>cv. Columbia</strain>
    </source>
</reference>
<reference key="5">
    <citation type="journal article" date="2006" name="Proc. Natl. Acad. Sci. U.S.A.">
        <title>PEAPOD regulates lamina size and curvature in Arabidopsis.</title>
        <authorList>
            <person name="White D.W.R."/>
        </authorList>
    </citation>
    <scope>FUNCTION</scope>
    <scope>DISRUPTION PHENOTYPE</scope>
    <scope>DEVELOPMENTAL STAGE</scope>
</reference>
<reference key="6">
    <citation type="journal article" date="2010" name="Nature">
        <title>NINJA connects the co-repressor TOPLESS to jasmonate signalling.</title>
        <authorList>
            <person name="Pauwels L."/>
            <person name="Barbero G.F."/>
            <person name="Geerinck J."/>
            <person name="Tilleman S."/>
            <person name="Grunewald W."/>
            <person name="Perez A.C."/>
            <person name="Chico J.M."/>
            <person name="Bossche R.V."/>
            <person name="Sewell J."/>
            <person name="Gil E."/>
            <person name="Garcia-Casado G."/>
            <person name="Witters E."/>
            <person name="Inze D."/>
            <person name="Long J.A."/>
            <person name="De Jaeger G."/>
            <person name="Solano R."/>
            <person name="Goossens A."/>
        </authorList>
    </citation>
    <scope>INTERACTION WITH AFPH2/NINJA</scope>
</reference>
<proteinExistence type="evidence at protein level"/>
<gene>
    <name type="primary">TIFY4B</name>
    <name type="synonym">PPD2</name>
    <name type="ordered locus">At4g14720</name>
    <name type="ORF">dl3400c</name>
    <name type="ORF">FCAALL.297</name>
</gene>
<accession>Q8GY55</accession>
<accession>O23328</accession>
<feature type="chain" id="PRO_0000300644" description="Protein TIFY 4B">
    <location>
        <begin position="1"/>
        <end position="315"/>
    </location>
</feature>
<feature type="domain" description="Tify" evidence="2">
    <location>
        <begin position="151"/>
        <end position="186"/>
    </location>
</feature>
<feature type="region of interest" description="Disordered" evidence="4">
    <location>
        <begin position="113"/>
        <end position="145"/>
    </location>
</feature>
<feature type="region of interest" description="Disordered" evidence="4">
    <location>
        <begin position="248"/>
        <end position="315"/>
    </location>
</feature>
<feature type="short sequence motif" description="Jas" evidence="1">
    <location>
        <begin position="233"/>
        <end position="260"/>
    </location>
</feature>
<feature type="short sequence motif" description="Nuclear localization signal" evidence="3">
    <location>
        <begin position="235"/>
        <end position="242"/>
    </location>
</feature>
<feature type="compositionally biased region" description="Basic residues" evidence="4">
    <location>
        <begin position="248"/>
        <end position="257"/>
    </location>
</feature>
<feature type="compositionally biased region" description="Polar residues" evidence="4">
    <location>
        <begin position="293"/>
        <end position="315"/>
    </location>
</feature>
<name>TIF4B_ARATH</name>
<comment type="function">
    <text evidence="5">Regulates the arrest of dispersed meristematic cells during lamina development.</text>
</comment>
<comment type="subunit">
    <text evidence="6">Interacts with AFPH2/NINJA.</text>
</comment>
<comment type="interaction">
    <interactant intactId="EBI-15206004">
        <id>Q8GY55</id>
    </interactant>
    <interactant intactId="EBI-1778843">
        <id>Q9S7Z2</id>
        <label>AFP4</label>
    </interactant>
    <organismsDiffer>false</organismsDiffer>
    <experiments>3</experiments>
</comment>
<comment type="interaction">
    <interactant intactId="EBI-15206004">
        <id>Q8GY55</id>
    </interactant>
    <interactant intactId="EBI-1787005">
        <id>Q9SV55</id>
        <label>AFPH2</label>
    </interactant>
    <organismsDiffer>false</organismsDiffer>
    <experiments>7</experiments>
</comment>
<comment type="interaction">
    <interactant intactId="EBI-15206004">
        <id>Q8GY55</id>
    </interactant>
    <interactant intactId="EBI-1100687">
        <id>Q9ZNV8</id>
        <label>AHP2</label>
    </interactant>
    <organismsDiffer>false</organismsDiffer>
    <experiments>3</experiments>
</comment>
<comment type="interaction">
    <interactant intactId="EBI-15206004">
        <id>Q8GY55</id>
    </interactant>
    <interactant intactId="EBI-1573499">
        <id>Q9LNW3</id>
        <label>AIP1</label>
    </interactant>
    <organismsDiffer>false</organismsDiffer>
    <experiments>3</experiments>
</comment>
<comment type="interaction">
    <interactant intactId="EBI-15206004">
        <id>Q8GY55</id>
    </interactant>
    <interactant intactId="EBI-1253508">
        <id>F4JL11</id>
        <label>IMPA2</label>
    </interactant>
    <organismsDiffer>false</organismsDiffer>
    <experiments>3</experiments>
</comment>
<comment type="interaction">
    <interactant intactId="EBI-15206004">
        <id>Q8GY55</id>
    </interactant>
    <interactant intactId="EBI-4425069">
        <id>Q84JY3</id>
        <label>KIX9</label>
    </interactant>
    <organismsDiffer>false</organismsDiffer>
    <experiments>3</experiments>
</comment>
<comment type="interaction">
    <interactant intactId="EBI-15206004">
        <id>Q8GY55</id>
    </interactant>
    <interactant intactId="EBI-2125983">
        <id>Q8LCG7</id>
        <label>NFYC2</label>
    </interactant>
    <organismsDiffer>false</organismsDiffer>
    <experiments>3</experiments>
</comment>
<comment type="interaction">
    <interactant intactId="EBI-15206004">
        <id>Q8GY55</id>
    </interactant>
    <interactant intactId="EBI-2466018">
        <id>Q9FMV5</id>
        <label>NFYC4</label>
    </interactant>
    <organismsDiffer>false</organismsDiffer>
    <experiments>3</experiments>
</comment>
<comment type="interaction">
    <interactant intactId="EBI-15206004">
        <id>Q8GY55</id>
    </interactant>
    <interactant intactId="EBI-2466050">
        <id>Q8L4B2</id>
        <label>NFYC9</label>
    </interactant>
    <organismsDiffer>false</organismsDiffer>
    <experiments>3</experiments>
</comment>
<comment type="interaction">
    <interactant intactId="EBI-15206004">
        <id>Q8GY55</id>
    </interactant>
    <interactant intactId="EBI-1238472">
        <id>Q9S7H5</id>
        <label>SCL21</label>
    </interactant>
    <organismsDiffer>false</organismsDiffer>
    <experiments>4</experiments>
</comment>
<comment type="interaction">
    <interactant intactId="EBI-15206004">
        <id>Q8GY55</id>
    </interactant>
    <interactant intactId="EBI-15199673">
        <id>Q7XA73</id>
        <label>TIFY4A</label>
    </interactant>
    <organismsDiffer>false</organismsDiffer>
    <experiments>3</experiments>
</comment>
<comment type="interaction">
    <interactant intactId="EBI-15206004">
        <id>Q8GY55</id>
    </interactant>
    <interactant intactId="EBI-1792431">
        <id>Q9LVI4</id>
        <label>TIFY6B</label>
    </interactant>
    <organismsDiffer>false</organismsDiffer>
    <experiments>3</experiments>
</comment>
<comment type="interaction">
    <interactant intactId="EBI-15206004">
        <id>Q8GY55</id>
    </interactant>
    <interactant intactId="EBI-4426557">
        <id>Q84MB2</id>
        <label>TIFY8</label>
    </interactant>
    <organismsDiffer>false</organismsDiffer>
    <experiments>3</experiments>
</comment>
<comment type="subcellular location">
    <subcellularLocation>
        <location evidence="3">Nucleus</location>
    </subcellularLocation>
</comment>
<comment type="developmental stage">
    <text evidence="5">First detected at the tip of developing leaf, followed by a tip-to-base progression of the expression.</text>
</comment>
<comment type="disruption phenotype">
    <text evidence="5">Plants lacking both TIFY4A and TIFY4B have larger leaves and cotyledon laminae, a dome-shaped leaf curvature and shortened siliques.</text>
</comment>
<comment type="miscellaneous">
    <text>Redundant with TIFY 4B/PPD2.</text>
</comment>
<comment type="similarity">
    <text evidence="7">Belongs to the TIFY/JAZ family.</text>
</comment>
<comment type="sequence caution" evidence="7">
    <conflict type="erroneous gene model prediction">
        <sequence resource="EMBL-CDS" id="CAB10251"/>
    </conflict>
</comment>
<comment type="sequence caution" evidence="7">
    <conflict type="erroneous gene model prediction">
        <sequence resource="EMBL-CDS" id="CAB78514"/>
    </conflict>
</comment>
<organism>
    <name type="scientific">Arabidopsis thaliana</name>
    <name type="common">Mouse-ear cress</name>
    <dbReference type="NCBI Taxonomy" id="3702"/>
    <lineage>
        <taxon>Eukaryota</taxon>
        <taxon>Viridiplantae</taxon>
        <taxon>Streptophyta</taxon>
        <taxon>Embryophyta</taxon>
        <taxon>Tracheophyta</taxon>
        <taxon>Spermatophyta</taxon>
        <taxon>Magnoliopsida</taxon>
        <taxon>eudicotyledons</taxon>
        <taxon>Gunneridae</taxon>
        <taxon>Pentapetalae</taxon>
        <taxon>rosids</taxon>
        <taxon>malvids</taxon>
        <taxon>Brassicales</taxon>
        <taxon>Brassicaceae</taxon>
        <taxon>Camelineae</taxon>
        <taxon>Arabidopsis</taxon>
    </lineage>
</organism>